<comment type="function">
    <text evidence="1">Mediates visceral muscle contractile activity (myotropic activity).</text>
</comment>
<comment type="subcellular location">
    <subcellularLocation>
        <location evidence="6">Secreted</location>
    </subcellularLocation>
</comment>
<comment type="similarity">
    <text evidence="2">Belongs to the periviscerokinin family.</text>
</comment>
<dbReference type="GO" id="GO:0005576">
    <property type="term" value="C:extracellular region"/>
    <property type="evidence" value="ECO:0007669"/>
    <property type="project" value="UniProtKB-SubCell"/>
</dbReference>
<dbReference type="GO" id="GO:0007218">
    <property type="term" value="P:neuropeptide signaling pathway"/>
    <property type="evidence" value="ECO:0007669"/>
    <property type="project" value="UniProtKB-KW"/>
</dbReference>
<dbReference type="InterPro" id="IPR013231">
    <property type="entry name" value="Periviscerokinin"/>
</dbReference>
<dbReference type="Pfam" id="PF08259">
    <property type="entry name" value="Periviscerokin"/>
    <property type="match status" value="1"/>
</dbReference>
<accession>B3A059</accession>
<protein>
    <recommendedName>
        <fullName evidence="4">CAPA-Periviscerokinin-1</fullName>
        <shortName evidence="4">CAPA-PVK-1</shortName>
    </recommendedName>
</protein>
<evidence type="ECO:0000250" key="1">
    <source>
        <dbReference type="UniProtKB" id="P83923"/>
    </source>
</evidence>
<evidence type="ECO:0000255" key="2"/>
<evidence type="ECO:0000269" key="3">
    <source>
    </source>
</evidence>
<evidence type="ECO:0000303" key="4">
    <source>
    </source>
</evidence>
<evidence type="ECO:0000305" key="5"/>
<evidence type="ECO:0000305" key="6">
    <source>
    </source>
</evidence>
<name>PVK1_KARBI</name>
<proteinExistence type="evidence at protein level"/>
<keyword id="KW-0027">Amidation</keyword>
<keyword id="KW-0903">Direct protein sequencing</keyword>
<keyword id="KW-0527">Neuropeptide</keyword>
<keyword id="KW-0964">Secreted</keyword>
<feature type="peptide" id="PRO_0000421636" description="CAPA-Periviscerokinin-1" evidence="3">
    <location>
        <begin position="1"/>
        <end position="11"/>
    </location>
</feature>
<feature type="modified residue" description="Valine amide" evidence="3">
    <location>
        <position position="11"/>
    </location>
</feature>
<sequence>EAAGLLPFPRV</sequence>
<reference evidence="5" key="1">
    <citation type="journal article" date="2012" name="Syst. Biol.">
        <title>Peptidomics-based phylogeny and biogeography of Mantophasmatodea (Hexapoda).</title>
        <authorList>
            <person name="Predel R."/>
            <person name="Neupert S."/>
            <person name="Huetteroth W."/>
            <person name="Kahnt J."/>
            <person name="Waidelich D."/>
            <person name="Roth S."/>
        </authorList>
    </citation>
    <scope>PROTEIN SEQUENCE</scope>
    <scope>AMIDATION AT VAL-11</scope>
    <source>
        <tissue evidence="3">Abdominal perisympathetic organs</tissue>
    </source>
</reference>
<organism>
    <name type="scientific">Karoophasma biedouwense</name>
    <name type="common">Gladiator</name>
    <name type="synonym">Heel-walker</name>
    <dbReference type="NCBI Taxonomy" id="253133"/>
    <lineage>
        <taxon>Eukaryota</taxon>
        <taxon>Metazoa</taxon>
        <taxon>Ecdysozoa</taxon>
        <taxon>Arthropoda</taxon>
        <taxon>Hexapoda</taxon>
        <taxon>Insecta</taxon>
        <taxon>Pterygota</taxon>
        <taxon>Neoptera</taxon>
        <taxon>Polyneoptera</taxon>
        <taxon>Mantophasmatodea</taxon>
        <taxon>Austrophasmatidae</taxon>
        <taxon>Karoophasma</taxon>
    </lineage>
</organism>